<dbReference type="EMBL" id="CP000975">
    <property type="protein sequence ID" value="ACD82745.1"/>
    <property type="molecule type" value="Genomic_DNA"/>
</dbReference>
<dbReference type="SMR" id="B3E0J1"/>
<dbReference type="STRING" id="481448.Minf_0690"/>
<dbReference type="KEGG" id="min:Minf_0690"/>
<dbReference type="eggNOG" id="COG0197">
    <property type="taxonomic scope" value="Bacteria"/>
</dbReference>
<dbReference type="HOGENOM" id="CLU_078858_2_1_0"/>
<dbReference type="Proteomes" id="UP000009149">
    <property type="component" value="Chromosome"/>
</dbReference>
<dbReference type="GO" id="GO:0022625">
    <property type="term" value="C:cytosolic large ribosomal subunit"/>
    <property type="evidence" value="ECO:0007669"/>
    <property type="project" value="TreeGrafter"/>
</dbReference>
<dbReference type="GO" id="GO:0019843">
    <property type="term" value="F:rRNA binding"/>
    <property type="evidence" value="ECO:0007669"/>
    <property type="project" value="UniProtKB-UniRule"/>
</dbReference>
<dbReference type="GO" id="GO:0003735">
    <property type="term" value="F:structural constituent of ribosome"/>
    <property type="evidence" value="ECO:0007669"/>
    <property type="project" value="InterPro"/>
</dbReference>
<dbReference type="GO" id="GO:0000049">
    <property type="term" value="F:tRNA binding"/>
    <property type="evidence" value="ECO:0007669"/>
    <property type="project" value="UniProtKB-KW"/>
</dbReference>
<dbReference type="GO" id="GO:0006412">
    <property type="term" value="P:translation"/>
    <property type="evidence" value="ECO:0007669"/>
    <property type="project" value="UniProtKB-UniRule"/>
</dbReference>
<dbReference type="CDD" id="cd01433">
    <property type="entry name" value="Ribosomal_L16_L10e"/>
    <property type="match status" value="1"/>
</dbReference>
<dbReference type="FunFam" id="3.90.1170.10:FF:000001">
    <property type="entry name" value="50S ribosomal protein L16"/>
    <property type="match status" value="1"/>
</dbReference>
<dbReference type="Gene3D" id="3.90.1170.10">
    <property type="entry name" value="Ribosomal protein L10e/L16"/>
    <property type="match status" value="1"/>
</dbReference>
<dbReference type="HAMAP" id="MF_01342">
    <property type="entry name" value="Ribosomal_uL16"/>
    <property type="match status" value="1"/>
</dbReference>
<dbReference type="InterPro" id="IPR047873">
    <property type="entry name" value="Ribosomal_uL16"/>
</dbReference>
<dbReference type="InterPro" id="IPR000114">
    <property type="entry name" value="Ribosomal_uL16_bact-type"/>
</dbReference>
<dbReference type="InterPro" id="IPR020798">
    <property type="entry name" value="Ribosomal_uL16_CS"/>
</dbReference>
<dbReference type="InterPro" id="IPR016180">
    <property type="entry name" value="Ribosomal_uL16_dom"/>
</dbReference>
<dbReference type="InterPro" id="IPR036920">
    <property type="entry name" value="Ribosomal_uL16_sf"/>
</dbReference>
<dbReference type="NCBIfam" id="TIGR01164">
    <property type="entry name" value="rplP_bact"/>
    <property type="match status" value="1"/>
</dbReference>
<dbReference type="PANTHER" id="PTHR12220">
    <property type="entry name" value="50S/60S RIBOSOMAL PROTEIN L16"/>
    <property type="match status" value="1"/>
</dbReference>
<dbReference type="PANTHER" id="PTHR12220:SF13">
    <property type="entry name" value="LARGE RIBOSOMAL SUBUNIT PROTEIN UL16M"/>
    <property type="match status" value="1"/>
</dbReference>
<dbReference type="Pfam" id="PF00252">
    <property type="entry name" value="Ribosomal_L16"/>
    <property type="match status" value="1"/>
</dbReference>
<dbReference type="PRINTS" id="PR00060">
    <property type="entry name" value="RIBOSOMALL16"/>
</dbReference>
<dbReference type="SUPFAM" id="SSF54686">
    <property type="entry name" value="Ribosomal protein L16p/L10e"/>
    <property type="match status" value="1"/>
</dbReference>
<dbReference type="PROSITE" id="PS00586">
    <property type="entry name" value="RIBOSOMAL_L16_1"/>
    <property type="match status" value="1"/>
</dbReference>
<dbReference type="PROSITE" id="PS00701">
    <property type="entry name" value="RIBOSOMAL_L16_2"/>
    <property type="match status" value="1"/>
</dbReference>
<gene>
    <name evidence="1" type="primary">rplP</name>
    <name type="ordered locus">Minf_0690</name>
</gene>
<reference key="1">
    <citation type="journal article" date="2008" name="Biol. Direct">
        <title>Complete genome sequence of the extremely acidophilic methanotroph isolate V4, Methylacidiphilum infernorum, a representative of the bacterial phylum Verrucomicrobia.</title>
        <authorList>
            <person name="Hou S."/>
            <person name="Makarova K.S."/>
            <person name="Saw J.H."/>
            <person name="Senin P."/>
            <person name="Ly B.V."/>
            <person name="Zhou Z."/>
            <person name="Ren Y."/>
            <person name="Wang J."/>
            <person name="Galperin M.Y."/>
            <person name="Omelchenko M.V."/>
            <person name="Wolf Y.I."/>
            <person name="Yutin N."/>
            <person name="Koonin E.V."/>
            <person name="Stott M.B."/>
            <person name="Mountain B.W."/>
            <person name="Crowe M.A."/>
            <person name="Smirnova A.V."/>
            <person name="Dunfield P.F."/>
            <person name="Feng L."/>
            <person name="Wang L."/>
            <person name="Alam M."/>
        </authorList>
    </citation>
    <scope>NUCLEOTIDE SEQUENCE [LARGE SCALE GENOMIC DNA]</scope>
    <source>
        <strain>Isolate V4</strain>
    </source>
</reference>
<comment type="function">
    <text evidence="1">Binds 23S rRNA and is also seen to make contacts with the A and possibly P site tRNAs.</text>
</comment>
<comment type="subunit">
    <text evidence="1">Part of the 50S ribosomal subunit.</text>
</comment>
<comment type="similarity">
    <text evidence="1">Belongs to the universal ribosomal protein uL16 family.</text>
</comment>
<accession>B3E0J1</accession>
<evidence type="ECO:0000255" key="1">
    <source>
        <dbReference type="HAMAP-Rule" id="MF_01342"/>
    </source>
</evidence>
<evidence type="ECO:0000256" key="2">
    <source>
        <dbReference type="SAM" id="MobiDB-lite"/>
    </source>
</evidence>
<evidence type="ECO:0000305" key="3"/>
<feature type="chain" id="PRO_0000354604" description="Large ribosomal subunit protein uL16">
    <location>
        <begin position="1"/>
        <end position="143"/>
    </location>
</feature>
<feature type="region of interest" description="Disordered" evidence="2">
    <location>
        <begin position="1"/>
        <end position="26"/>
    </location>
</feature>
<feature type="compositionally biased region" description="Basic residues" evidence="2">
    <location>
        <begin position="8"/>
        <end position="20"/>
    </location>
</feature>
<proteinExistence type="inferred from homology"/>
<sequence length="143" mass="16227">MSMALLPRRVKYRKSQRGSRKGNATRGTELAFGSFGMQALERAWITNTQIEAARVAIMRNVKRKGRLWIRIFPDKSVTARPPETRMGKGKGQPAFWVAVVLPGRILFELDGLPEQVAKESMRLAAAKLPIHTRFITRERLVKV</sequence>
<name>RL16_METI4</name>
<organism>
    <name type="scientific">Methylacidiphilum infernorum (isolate V4)</name>
    <name type="common">Methylokorus infernorum (strain V4)</name>
    <dbReference type="NCBI Taxonomy" id="481448"/>
    <lineage>
        <taxon>Bacteria</taxon>
        <taxon>Pseudomonadati</taxon>
        <taxon>Verrucomicrobiota</taxon>
        <taxon>Methylacidiphilae</taxon>
        <taxon>Methylacidiphilales</taxon>
        <taxon>Methylacidiphilaceae</taxon>
        <taxon>Methylacidiphilum (ex Ratnadevi et al. 2023)</taxon>
    </lineage>
</organism>
<keyword id="KW-0687">Ribonucleoprotein</keyword>
<keyword id="KW-0689">Ribosomal protein</keyword>
<keyword id="KW-0694">RNA-binding</keyword>
<keyword id="KW-0699">rRNA-binding</keyword>
<keyword id="KW-0820">tRNA-binding</keyword>
<protein>
    <recommendedName>
        <fullName evidence="1">Large ribosomal subunit protein uL16</fullName>
    </recommendedName>
    <alternativeName>
        <fullName evidence="3">50S ribosomal protein L16</fullName>
    </alternativeName>
</protein>